<name>NDK_PICTO</name>
<dbReference type="EC" id="2.7.4.6" evidence="1"/>
<dbReference type="EMBL" id="AE017261">
    <property type="protein sequence ID" value="AAT43868.1"/>
    <property type="status" value="ALT_INIT"/>
    <property type="molecule type" value="Genomic_DNA"/>
</dbReference>
<dbReference type="RefSeq" id="WP_011178084.1">
    <property type="nucleotide sequence ID" value="NZ_FWYE01000002.1"/>
</dbReference>
<dbReference type="SMR" id="Q6KZI4"/>
<dbReference type="FunCoup" id="Q6KZI4">
    <property type="interactions" value="229"/>
</dbReference>
<dbReference type="STRING" id="263820.PTO1283"/>
<dbReference type="PaxDb" id="263820-PTO1283"/>
<dbReference type="GeneID" id="2844246"/>
<dbReference type="KEGG" id="pto:PTO1283"/>
<dbReference type="PATRIC" id="fig|263820.9.peg.1332"/>
<dbReference type="eggNOG" id="arCOG04313">
    <property type="taxonomic scope" value="Archaea"/>
</dbReference>
<dbReference type="HOGENOM" id="CLU_060216_6_3_2"/>
<dbReference type="InParanoid" id="Q6KZI4"/>
<dbReference type="OrthoDB" id="6874at2157"/>
<dbReference type="Proteomes" id="UP000000438">
    <property type="component" value="Chromosome"/>
</dbReference>
<dbReference type="GO" id="GO:0005737">
    <property type="term" value="C:cytoplasm"/>
    <property type="evidence" value="ECO:0007669"/>
    <property type="project" value="UniProtKB-SubCell"/>
</dbReference>
<dbReference type="GO" id="GO:0005524">
    <property type="term" value="F:ATP binding"/>
    <property type="evidence" value="ECO:0007669"/>
    <property type="project" value="UniProtKB-UniRule"/>
</dbReference>
<dbReference type="GO" id="GO:0046872">
    <property type="term" value="F:metal ion binding"/>
    <property type="evidence" value="ECO:0007669"/>
    <property type="project" value="UniProtKB-KW"/>
</dbReference>
<dbReference type="GO" id="GO:0004550">
    <property type="term" value="F:nucleoside diphosphate kinase activity"/>
    <property type="evidence" value="ECO:0007669"/>
    <property type="project" value="UniProtKB-UniRule"/>
</dbReference>
<dbReference type="GO" id="GO:0006241">
    <property type="term" value="P:CTP biosynthetic process"/>
    <property type="evidence" value="ECO:0007669"/>
    <property type="project" value="UniProtKB-UniRule"/>
</dbReference>
<dbReference type="GO" id="GO:0006183">
    <property type="term" value="P:GTP biosynthetic process"/>
    <property type="evidence" value="ECO:0007669"/>
    <property type="project" value="UniProtKB-UniRule"/>
</dbReference>
<dbReference type="GO" id="GO:0006228">
    <property type="term" value="P:UTP biosynthetic process"/>
    <property type="evidence" value="ECO:0007669"/>
    <property type="project" value="UniProtKB-UniRule"/>
</dbReference>
<dbReference type="CDD" id="cd04413">
    <property type="entry name" value="NDPk_I"/>
    <property type="match status" value="1"/>
</dbReference>
<dbReference type="FunFam" id="3.30.70.141:FF:000003">
    <property type="entry name" value="Nucleoside diphosphate kinase"/>
    <property type="match status" value="1"/>
</dbReference>
<dbReference type="Gene3D" id="3.30.70.141">
    <property type="entry name" value="Nucleoside diphosphate kinase-like domain"/>
    <property type="match status" value="1"/>
</dbReference>
<dbReference type="HAMAP" id="MF_00451">
    <property type="entry name" value="NDP_kinase"/>
    <property type="match status" value="1"/>
</dbReference>
<dbReference type="InterPro" id="IPR034907">
    <property type="entry name" value="NDK-like_dom"/>
</dbReference>
<dbReference type="InterPro" id="IPR036850">
    <property type="entry name" value="NDK-like_dom_sf"/>
</dbReference>
<dbReference type="InterPro" id="IPR001564">
    <property type="entry name" value="Nucleoside_diP_kinase"/>
</dbReference>
<dbReference type="InterPro" id="IPR023005">
    <property type="entry name" value="Nucleoside_diP_kinase_AS"/>
</dbReference>
<dbReference type="NCBIfam" id="NF001908">
    <property type="entry name" value="PRK00668.1"/>
    <property type="match status" value="1"/>
</dbReference>
<dbReference type="PANTHER" id="PTHR11349">
    <property type="entry name" value="NUCLEOSIDE DIPHOSPHATE KINASE"/>
    <property type="match status" value="1"/>
</dbReference>
<dbReference type="Pfam" id="PF00334">
    <property type="entry name" value="NDK"/>
    <property type="match status" value="1"/>
</dbReference>
<dbReference type="PRINTS" id="PR01243">
    <property type="entry name" value="NUCDPKINASE"/>
</dbReference>
<dbReference type="SMART" id="SM00562">
    <property type="entry name" value="NDK"/>
    <property type="match status" value="1"/>
</dbReference>
<dbReference type="SUPFAM" id="SSF54919">
    <property type="entry name" value="Nucleoside diphosphate kinase, NDK"/>
    <property type="match status" value="1"/>
</dbReference>
<dbReference type="PROSITE" id="PS00469">
    <property type="entry name" value="NDPK"/>
    <property type="match status" value="1"/>
</dbReference>
<dbReference type="PROSITE" id="PS51374">
    <property type="entry name" value="NDPK_LIKE"/>
    <property type="match status" value="1"/>
</dbReference>
<evidence type="ECO:0000255" key="1">
    <source>
        <dbReference type="HAMAP-Rule" id="MF_00451"/>
    </source>
</evidence>
<evidence type="ECO:0000305" key="2"/>
<accession>Q6KZI4</accession>
<keyword id="KW-0067">ATP-binding</keyword>
<keyword id="KW-0963">Cytoplasm</keyword>
<keyword id="KW-0418">Kinase</keyword>
<keyword id="KW-0460">Magnesium</keyword>
<keyword id="KW-0479">Metal-binding</keyword>
<keyword id="KW-0546">Nucleotide metabolism</keyword>
<keyword id="KW-0547">Nucleotide-binding</keyword>
<keyword id="KW-0597">Phosphoprotein</keyword>
<keyword id="KW-0808">Transferase</keyword>
<proteinExistence type="inferred from homology"/>
<organism>
    <name type="scientific">Picrophilus torridus (strain ATCC 700027 / DSM 9790 / JCM 10055 / NBRC 100828 / KAW 2/3)</name>
    <dbReference type="NCBI Taxonomy" id="1122961"/>
    <lineage>
        <taxon>Archaea</taxon>
        <taxon>Methanobacteriati</taxon>
        <taxon>Thermoplasmatota</taxon>
        <taxon>Thermoplasmata</taxon>
        <taxon>Thermoplasmatales</taxon>
        <taxon>Picrophilaceae</taxon>
        <taxon>Picrophilus</taxon>
    </lineage>
</organism>
<gene>
    <name evidence="1" type="primary">ndk</name>
    <name type="ordered locus">PTO1283</name>
</gene>
<comment type="function">
    <text evidence="1">Major role in the synthesis of nucleoside triphosphates other than ATP. The ATP gamma phosphate is transferred to the NDP beta phosphate via a ping-pong mechanism, using a phosphorylated active-site intermediate.</text>
</comment>
<comment type="catalytic activity">
    <reaction evidence="1">
        <text>a 2'-deoxyribonucleoside 5'-diphosphate + ATP = a 2'-deoxyribonucleoside 5'-triphosphate + ADP</text>
        <dbReference type="Rhea" id="RHEA:44640"/>
        <dbReference type="ChEBI" id="CHEBI:30616"/>
        <dbReference type="ChEBI" id="CHEBI:61560"/>
        <dbReference type="ChEBI" id="CHEBI:73316"/>
        <dbReference type="ChEBI" id="CHEBI:456216"/>
        <dbReference type="EC" id="2.7.4.6"/>
    </reaction>
</comment>
<comment type="catalytic activity">
    <reaction evidence="1">
        <text>a ribonucleoside 5'-diphosphate + ATP = a ribonucleoside 5'-triphosphate + ADP</text>
        <dbReference type="Rhea" id="RHEA:18113"/>
        <dbReference type="ChEBI" id="CHEBI:30616"/>
        <dbReference type="ChEBI" id="CHEBI:57930"/>
        <dbReference type="ChEBI" id="CHEBI:61557"/>
        <dbReference type="ChEBI" id="CHEBI:456216"/>
        <dbReference type="EC" id="2.7.4.6"/>
    </reaction>
</comment>
<comment type="cofactor">
    <cofactor evidence="1">
        <name>Mg(2+)</name>
        <dbReference type="ChEBI" id="CHEBI:18420"/>
    </cofactor>
</comment>
<comment type="subcellular location">
    <subcellularLocation>
        <location evidence="1">Cytoplasm</location>
    </subcellularLocation>
</comment>
<comment type="similarity">
    <text evidence="1">Belongs to the NDK family.</text>
</comment>
<comment type="sequence caution" evidence="2">
    <conflict type="erroneous initiation">
        <sequence resource="EMBL-CDS" id="AAT43868"/>
    </conflict>
</comment>
<reference key="1">
    <citation type="journal article" date="2004" name="Proc. Natl. Acad. Sci. U.S.A.">
        <title>Genome sequence of Picrophilus torridus and its implications for life around pH 0.</title>
        <authorList>
            <person name="Fuetterer O."/>
            <person name="Angelov A."/>
            <person name="Liesegang H."/>
            <person name="Gottschalk G."/>
            <person name="Schleper C."/>
            <person name="Schepers B."/>
            <person name="Dock C."/>
            <person name="Antranikian G."/>
            <person name="Liebl W."/>
        </authorList>
    </citation>
    <scope>NUCLEOTIDE SEQUENCE [LARGE SCALE GENOMIC DNA]</scope>
    <source>
        <strain>ATCC 700027 / DSM 9790 / JCM 10055 / NBRC 100828 / KAW 2/3</strain>
    </source>
</reference>
<feature type="chain" id="PRO_0000137095" description="Nucleoside diphosphate kinase">
    <location>
        <begin position="1"/>
        <end position="138"/>
    </location>
</feature>
<feature type="active site" description="Pros-phosphohistidine intermediate" evidence="1">
    <location>
        <position position="115"/>
    </location>
</feature>
<feature type="binding site" evidence="1">
    <location>
        <position position="9"/>
    </location>
    <ligand>
        <name>ATP</name>
        <dbReference type="ChEBI" id="CHEBI:30616"/>
    </ligand>
</feature>
<feature type="binding site" evidence="1">
    <location>
        <position position="57"/>
    </location>
    <ligand>
        <name>ATP</name>
        <dbReference type="ChEBI" id="CHEBI:30616"/>
    </ligand>
</feature>
<feature type="binding site" evidence="1">
    <location>
        <position position="85"/>
    </location>
    <ligand>
        <name>ATP</name>
        <dbReference type="ChEBI" id="CHEBI:30616"/>
    </ligand>
</feature>
<feature type="binding site" evidence="1">
    <location>
        <position position="91"/>
    </location>
    <ligand>
        <name>ATP</name>
        <dbReference type="ChEBI" id="CHEBI:30616"/>
    </ligand>
</feature>
<feature type="binding site" evidence="1">
    <location>
        <position position="102"/>
    </location>
    <ligand>
        <name>ATP</name>
        <dbReference type="ChEBI" id="CHEBI:30616"/>
    </ligand>
</feature>
<feature type="binding site" evidence="1">
    <location>
        <position position="112"/>
    </location>
    <ligand>
        <name>ATP</name>
        <dbReference type="ChEBI" id="CHEBI:30616"/>
    </ligand>
</feature>
<sequence length="138" mass="15520">MERCLILVKPDGVERNLIGEVISRFERKGLAIKALKMMRVTREQAEDHYSVHRLKPFFDDLVSYLTSGPIVAMIVEGNNAIASSRMLAGATDGSKAAPGTIRGDFSLDIERNIVHASDSLESYEHEYKIFFNENEIMD</sequence>
<protein>
    <recommendedName>
        <fullName evidence="1">Nucleoside diphosphate kinase</fullName>
        <shortName evidence="1">NDK</shortName>
        <shortName evidence="1">NDP kinase</shortName>
        <ecNumber evidence="1">2.7.4.6</ecNumber>
    </recommendedName>
    <alternativeName>
        <fullName evidence="1">Nucleoside-2-P kinase</fullName>
    </alternativeName>
</protein>